<gene>
    <name evidence="1" type="primary">apaH</name>
    <name type="ordered locus">EcHS_A0055</name>
</gene>
<evidence type="ECO:0000255" key="1">
    <source>
        <dbReference type="HAMAP-Rule" id="MF_00199"/>
    </source>
</evidence>
<comment type="function">
    <text evidence="1">Hydrolyzes diadenosine 5',5'''-P1,P4-tetraphosphate to yield ADP.</text>
</comment>
<comment type="catalytic activity">
    <reaction evidence="1">
        <text>P(1),P(4)-bis(5'-adenosyl) tetraphosphate + H2O = 2 ADP + 2 H(+)</text>
        <dbReference type="Rhea" id="RHEA:24252"/>
        <dbReference type="ChEBI" id="CHEBI:15377"/>
        <dbReference type="ChEBI" id="CHEBI:15378"/>
        <dbReference type="ChEBI" id="CHEBI:58141"/>
        <dbReference type="ChEBI" id="CHEBI:456216"/>
        <dbReference type="EC" id="3.6.1.41"/>
    </reaction>
</comment>
<comment type="similarity">
    <text evidence="1">Belongs to the Ap4A hydrolase family.</text>
</comment>
<protein>
    <recommendedName>
        <fullName evidence="1">Bis(5'-nucleosyl)-tetraphosphatase, symmetrical</fullName>
        <ecNumber evidence="1">3.6.1.41</ecNumber>
    </recommendedName>
    <alternativeName>
        <fullName evidence="1">Ap4A hydrolase</fullName>
    </alternativeName>
    <alternativeName>
        <fullName evidence="1">Diadenosine 5',5'''-P1,P4-tetraphosphate pyrophosphohydrolase</fullName>
    </alternativeName>
    <alternativeName>
        <fullName evidence="1">Diadenosine tetraphosphatase</fullName>
    </alternativeName>
</protein>
<feature type="chain" id="PRO_1000058557" description="Bis(5'-nucleosyl)-tetraphosphatase, symmetrical">
    <location>
        <begin position="1"/>
        <end position="280"/>
    </location>
</feature>
<name>APAH_ECOHS</name>
<reference key="1">
    <citation type="journal article" date="2008" name="J. Bacteriol.">
        <title>The pangenome structure of Escherichia coli: comparative genomic analysis of E. coli commensal and pathogenic isolates.</title>
        <authorList>
            <person name="Rasko D.A."/>
            <person name="Rosovitz M.J."/>
            <person name="Myers G.S.A."/>
            <person name="Mongodin E.F."/>
            <person name="Fricke W.F."/>
            <person name="Gajer P."/>
            <person name="Crabtree J."/>
            <person name="Sebaihia M."/>
            <person name="Thomson N.R."/>
            <person name="Chaudhuri R."/>
            <person name="Henderson I.R."/>
            <person name="Sperandio V."/>
            <person name="Ravel J."/>
        </authorList>
    </citation>
    <scope>NUCLEOTIDE SEQUENCE [LARGE SCALE GENOMIC DNA]</scope>
    <source>
        <strain>HS</strain>
    </source>
</reference>
<organism>
    <name type="scientific">Escherichia coli O9:H4 (strain HS)</name>
    <dbReference type="NCBI Taxonomy" id="331112"/>
    <lineage>
        <taxon>Bacteria</taxon>
        <taxon>Pseudomonadati</taxon>
        <taxon>Pseudomonadota</taxon>
        <taxon>Gammaproteobacteria</taxon>
        <taxon>Enterobacterales</taxon>
        <taxon>Enterobacteriaceae</taxon>
        <taxon>Escherichia</taxon>
    </lineage>
</organism>
<proteinExistence type="inferred from homology"/>
<sequence length="280" mass="31283">MATYLIGDVHGCYDELIALLHKVEFTPGKDTLWLTGDLVARGPGSLDVLRYVKSLGDSVRLVLGNHDLHLLAVFAGISRNKPKDRLTPLLEAPDADELLNWLRRQPLLQIDEEKKLVMAHAGITPQWDLQTAKECARDVEAVLSSDSYPFFLDAMYGDMPNNWSPELRGLGRLRFITNAFTRMRFCFPNGQLDMYSKESPEEAPAPLKPWFAIPGPVAEEYSIAFGHWASLEGKGTPEGIYALDTGCCWGGSLTCLRWEDKQYFVQPSNRHKDLGEAAAS</sequence>
<accession>A7ZW01</accession>
<dbReference type="EC" id="3.6.1.41" evidence="1"/>
<dbReference type="EMBL" id="CP000802">
    <property type="protein sequence ID" value="ABV04455.1"/>
    <property type="molecule type" value="Genomic_DNA"/>
</dbReference>
<dbReference type="RefSeq" id="WP_000257186.1">
    <property type="nucleotide sequence ID" value="NC_009800.1"/>
</dbReference>
<dbReference type="SMR" id="A7ZW01"/>
<dbReference type="KEGG" id="ecx:EcHS_A0055"/>
<dbReference type="HOGENOM" id="CLU_056184_2_0_6"/>
<dbReference type="GO" id="GO:0008803">
    <property type="term" value="F:bis(5'-nucleosyl)-tetraphosphatase (symmetrical) activity"/>
    <property type="evidence" value="ECO:0007669"/>
    <property type="project" value="UniProtKB-UniRule"/>
</dbReference>
<dbReference type="CDD" id="cd07422">
    <property type="entry name" value="MPP_ApaH"/>
    <property type="match status" value="1"/>
</dbReference>
<dbReference type="FunFam" id="3.60.21.10:FF:000013">
    <property type="entry name" value="Bis(5'-nucleosyl)-tetraphosphatase, symmetrical"/>
    <property type="match status" value="1"/>
</dbReference>
<dbReference type="Gene3D" id="3.60.21.10">
    <property type="match status" value="1"/>
</dbReference>
<dbReference type="HAMAP" id="MF_00199">
    <property type="entry name" value="ApaH"/>
    <property type="match status" value="1"/>
</dbReference>
<dbReference type="InterPro" id="IPR004617">
    <property type="entry name" value="ApaH"/>
</dbReference>
<dbReference type="InterPro" id="IPR004843">
    <property type="entry name" value="Calcineurin-like_PHP_ApaH"/>
</dbReference>
<dbReference type="InterPro" id="IPR029052">
    <property type="entry name" value="Metallo-depent_PP-like"/>
</dbReference>
<dbReference type="NCBIfam" id="TIGR00668">
    <property type="entry name" value="apaH"/>
    <property type="match status" value="1"/>
</dbReference>
<dbReference type="NCBIfam" id="NF001204">
    <property type="entry name" value="PRK00166.1"/>
    <property type="match status" value="1"/>
</dbReference>
<dbReference type="PANTHER" id="PTHR40942">
    <property type="match status" value="1"/>
</dbReference>
<dbReference type="PANTHER" id="PTHR40942:SF4">
    <property type="entry name" value="CYTOCHROME C5"/>
    <property type="match status" value="1"/>
</dbReference>
<dbReference type="Pfam" id="PF00149">
    <property type="entry name" value="Metallophos"/>
    <property type="match status" value="1"/>
</dbReference>
<dbReference type="PIRSF" id="PIRSF000903">
    <property type="entry name" value="B5n-ttraPtase_sm"/>
    <property type="match status" value="1"/>
</dbReference>
<dbReference type="SUPFAM" id="SSF56300">
    <property type="entry name" value="Metallo-dependent phosphatases"/>
    <property type="match status" value="1"/>
</dbReference>
<keyword id="KW-0378">Hydrolase</keyword>